<organism>
    <name type="scientific">Schizosaccharomyces pombe (strain 972 / ATCC 24843)</name>
    <name type="common">Fission yeast</name>
    <dbReference type="NCBI Taxonomy" id="284812"/>
    <lineage>
        <taxon>Eukaryota</taxon>
        <taxon>Fungi</taxon>
        <taxon>Dikarya</taxon>
        <taxon>Ascomycota</taxon>
        <taxon>Taphrinomycotina</taxon>
        <taxon>Schizosaccharomycetes</taxon>
        <taxon>Schizosaccharomycetales</taxon>
        <taxon>Schizosaccharomycetaceae</taxon>
        <taxon>Schizosaccharomyces</taxon>
    </lineage>
</organism>
<keyword id="KW-0256">Endoplasmic reticulum</keyword>
<keyword id="KW-0464">Manganese</keyword>
<keyword id="KW-0472">Membrane</keyword>
<keyword id="KW-0479">Metal-binding</keyword>
<keyword id="KW-0597">Phosphoprotein</keyword>
<keyword id="KW-1185">Reference proteome</keyword>
<keyword id="KW-0812">Transmembrane</keyword>
<keyword id="KW-1133">Transmembrane helix</keyword>
<keyword id="KW-0813">Transport</keyword>
<comment type="function">
    <text evidence="2">Transports manganese ions into the cell. Regulates cell morphogenesis through control of manganese homeostasis.</text>
</comment>
<comment type="subcellular location">
    <subcellularLocation>
        <location evidence="3">Endoplasmic reticulum membrane</location>
        <topology evidence="3">Multi-pass membrane protein</topology>
    </subcellularLocation>
</comment>
<comment type="similarity">
    <text evidence="5">Belongs to the NRAMP family.</text>
</comment>
<evidence type="ECO:0000255" key="1"/>
<evidence type="ECO:0000269" key="2">
    <source>
    </source>
</evidence>
<evidence type="ECO:0000269" key="3">
    <source>
    </source>
</evidence>
<evidence type="ECO:0000269" key="4">
    <source>
    </source>
</evidence>
<evidence type="ECO:0000305" key="5"/>
<reference key="1">
    <citation type="journal article" date="2002" name="Nature">
        <title>The genome sequence of Schizosaccharomyces pombe.</title>
        <authorList>
            <person name="Wood V."/>
            <person name="Gwilliam R."/>
            <person name="Rajandream M.A."/>
            <person name="Lyne M.H."/>
            <person name="Lyne R."/>
            <person name="Stewart A."/>
            <person name="Sgouros J.G."/>
            <person name="Peat N."/>
            <person name="Hayles J."/>
            <person name="Baker S.G."/>
            <person name="Basham D."/>
            <person name="Bowman S."/>
            <person name="Brooks K."/>
            <person name="Brown D."/>
            <person name="Brown S."/>
            <person name="Chillingworth T."/>
            <person name="Churcher C.M."/>
            <person name="Collins M."/>
            <person name="Connor R."/>
            <person name="Cronin A."/>
            <person name="Davis P."/>
            <person name="Feltwell T."/>
            <person name="Fraser A."/>
            <person name="Gentles S."/>
            <person name="Goble A."/>
            <person name="Hamlin N."/>
            <person name="Harris D.E."/>
            <person name="Hidalgo J."/>
            <person name="Hodgson G."/>
            <person name="Holroyd S."/>
            <person name="Hornsby T."/>
            <person name="Howarth S."/>
            <person name="Huckle E.J."/>
            <person name="Hunt S."/>
            <person name="Jagels K."/>
            <person name="James K.D."/>
            <person name="Jones L."/>
            <person name="Jones M."/>
            <person name="Leather S."/>
            <person name="McDonald S."/>
            <person name="McLean J."/>
            <person name="Mooney P."/>
            <person name="Moule S."/>
            <person name="Mungall K.L."/>
            <person name="Murphy L.D."/>
            <person name="Niblett D."/>
            <person name="Odell C."/>
            <person name="Oliver K."/>
            <person name="O'Neil S."/>
            <person name="Pearson D."/>
            <person name="Quail M.A."/>
            <person name="Rabbinowitsch E."/>
            <person name="Rutherford K.M."/>
            <person name="Rutter S."/>
            <person name="Saunders D."/>
            <person name="Seeger K."/>
            <person name="Sharp S."/>
            <person name="Skelton J."/>
            <person name="Simmonds M.N."/>
            <person name="Squares R."/>
            <person name="Squares S."/>
            <person name="Stevens K."/>
            <person name="Taylor K."/>
            <person name="Taylor R.G."/>
            <person name="Tivey A."/>
            <person name="Walsh S.V."/>
            <person name="Warren T."/>
            <person name="Whitehead S."/>
            <person name="Woodward J.R."/>
            <person name="Volckaert G."/>
            <person name="Aert R."/>
            <person name="Robben J."/>
            <person name="Grymonprez B."/>
            <person name="Weltjens I."/>
            <person name="Vanstreels E."/>
            <person name="Rieger M."/>
            <person name="Schaefer M."/>
            <person name="Mueller-Auer S."/>
            <person name="Gabel C."/>
            <person name="Fuchs M."/>
            <person name="Duesterhoeft A."/>
            <person name="Fritzc C."/>
            <person name="Holzer E."/>
            <person name="Moestl D."/>
            <person name="Hilbert H."/>
            <person name="Borzym K."/>
            <person name="Langer I."/>
            <person name="Beck A."/>
            <person name="Lehrach H."/>
            <person name="Reinhardt R."/>
            <person name="Pohl T.M."/>
            <person name="Eger P."/>
            <person name="Zimmermann W."/>
            <person name="Wedler H."/>
            <person name="Wambutt R."/>
            <person name="Purnelle B."/>
            <person name="Goffeau A."/>
            <person name="Cadieu E."/>
            <person name="Dreano S."/>
            <person name="Gloux S."/>
            <person name="Lelaure V."/>
            <person name="Mottier S."/>
            <person name="Galibert F."/>
            <person name="Aves S.J."/>
            <person name="Xiang Z."/>
            <person name="Hunt C."/>
            <person name="Moore K."/>
            <person name="Hurst S.M."/>
            <person name="Lucas M."/>
            <person name="Rochet M."/>
            <person name="Gaillardin C."/>
            <person name="Tallada V.A."/>
            <person name="Garzon A."/>
            <person name="Thode G."/>
            <person name="Daga R.R."/>
            <person name="Cruzado L."/>
            <person name="Jimenez J."/>
            <person name="Sanchez M."/>
            <person name="del Rey F."/>
            <person name="Benito J."/>
            <person name="Dominguez A."/>
            <person name="Revuelta J.L."/>
            <person name="Moreno S."/>
            <person name="Armstrong J."/>
            <person name="Forsburg S.L."/>
            <person name="Cerutti L."/>
            <person name="Lowe T."/>
            <person name="McCombie W.R."/>
            <person name="Paulsen I."/>
            <person name="Potashkin J."/>
            <person name="Shpakovski G.V."/>
            <person name="Ussery D."/>
            <person name="Barrell B.G."/>
            <person name="Nurse P."/>
        </authorList>
    </citation>
    <scope>NUCLEOTIDE SEQUENCE [LARGE SCALE GENOMIC DNA]</scope>
    <source>
        <strain>972 / ATCC 24843</strain>
    </source>
</reference>
<reference key="2">
    <citation type="journal article" date="2004" name="Genes Cells">
        <title>Pmr1, a P-type ATPase, and Pdt1, an Nramp homologue, cooperatively regulate cell morphogenesis in fission yeast: the importance of Mn2+ homeostasis.</title>
        <authorList>
            <person name="Maeda T."/>
            <person name="Sugiura R."/>
            <person name="Kita A."/>
            <person name="Saito M."/>
            <person name="Deng L."/>
            <person name="He Y."/>
            <person name="Yabin L."/>
            <person name="Fujita Y."/>
            <person name="Takegawa K."/>
            <person name="Shuntoh H."/>
            <person name="Kuno T."/>
        </authorList>
    </citation>
    <scope>FUNCTION</scope>
</reference>
<reference key="3">
    <citation type="journal article" date="2006" name="Nat. Biotechnol.">
        <title>ORFeome cloning and global analysis of protein localization in the fission yeast Schizosaccharomyces pombe.</title>
        <authorList>
            <person name="Matsuyama A."/>
            <person name="Arai R."/>
            <person name="Yashiroda Y."/>
            <person name="Shirai A."/>
            <person name="Kamata A."/>
            <person name="Sekido S."/>
            <person name="Kobayashi Y."/>
            <person name="Hashimoto A."/>
            <person name="Hamamoto M."/>
            <person name="Hiraoka Y."/>
            <person name="Horinouchi S."/>
            <person name="Yoshida M."/>
        </authorList>
    </citation>
    <scope>SUBCELLULAR LOCATION [LARGE SCALE ANALYSIS]</scope>
</reference>
<reference key="4">
    <citation type="journal article" date="2008" name="J. Proteome Res.">
        <title>Phosphoproteome analysis of fission yeast.</title>
        <authorList>
            <person name="Wilson-Grady J.T."/>
            <person name="Villen J."/>
            <person name="Gygi S.P."/>
        </authorList>
    </citation>
    <scope>PHOSPHORYLATION [LARGE SCALE ANALYSIS] AT SER-42 AND THR-43</scope>
    <scope>IDENTIFICATION BY MASS SPECTROMETRY</scope>
</reference>
<dbReference type="EMBL" id="CU329670">
    <property type="protein sequence ID" value="CAA93297.1"/>
    <property type="molecule type" value="Genomic_DNA"/>
</dbReference>
<dbReference type="PIR" id="T38466">
    <property type="entry name" value="T38466"/>
</dbReference>
<dbReference type="RefSeq" id="NP_594537.1">
    <property type="nucleotide sequence ID" value="NM_001019966.2"/>
</dbReference>
<dbReference type="SMR" id="Q10177"/>
<dbReference type="BioGRID" id="278751">
    <property type="interactions" value="38"/>
</dbReference>
<dbReference type="FunCoup" id="Q10177">
    <property type="interactions" value="170"/>
</dbReference>
<dbReference type="STRING" id="284812.Q10177"/>
<dbReference type="TCDB" id="2.A.55.1.4">
    <property type="family name" value="the metal ion (mn(2+)-iron) transporter (nramp) family"/>
</dbReference>
<dbReference type="iPTMnet" id="Q10177"/>
<dbReference type="SwissPalm" id="Q10177"/>
<dbReference type="PaxDb" id="4896-SPAC27F1.08.1"/>
<dbReference type="EnsemblFungi" id="SPAC27F1.08.1">
    <property type="protein sequence ID" value="SPAC27F1.08.1:pep"/>
    <property type="gene ID" value="SPAC27F1.08"/>
</dbReference>
<dbReference type="GeneID" id="2542283"/>
<dbReference type="KEGG" id="spo:2542283"/>
<dbReference type="PomBase" id="SPAC27F1.08">
    <property type="gene designation" value="pdt1"/>
</dbReference>
<dbReference type="VEuPathDB" id="FungiDB:SPAC27F1.08"/>
<dbReference type="eggNOG" id="KOG1291">
    <property type="taxonomic scope" value="Eukaryota"/>
</dbReference>
<dbReference type="HOGENOM" id="CLU_020088_4_2_1"/>
<dbReference type="InParanoid" id="Q10177"/>
<dbReference type="OMA" id="YEYYPRT"/>
<dbReference type="PhylomeDB" id="Q10177"/>
<dbReference type="PRO" id="PR:Q10177"/>
<dbReference type="Proteomes" id="UP000002485">
    <property type="component" value="Chromosome I"/>
</dbReference>
<dbReference type="GO" id="GO:0005789">
    <property type="term" value="C:endoplasmic reticulum membrane"/>
    <property type="evidence" value="ECO:0007669"/>
    <property type="project" value="UniProtKB-SubCell"/>
</dbReference>
<dbReference type="GO" id="GO:0005886">
    <property type="term" value="C:plasma membrane"/>
    <property type="evidence" value="ECO:0000318"/>
    <property type="project" value="GO_Central"/>
</dbReference>
<dbReference type="GO" id="GO:0015086">
    <property type="term" value="F:cadmium ion transmembrane transporter activity"/>
    <property type="evidence" value="ECO:0000318"/>
    <property type="project" value="GO_Central"/>
</dbReference>
<dbReference type="GO" id="GO:0005384">
    <property type="term" value="F:manganese ion transmembrane transporter activity"/>
    <property type="evidence" value="ECO:0000318"/>
    <property type="project" value="GO_Central"/>
</dbReference>
<dbReference type="GO" id="GO:0046872">
    <property type="term" value="F:metal ion binding"/>
    <property type="evidence" value="ECO:0007669"/>
    <property type="project" value="UniProtKB-KW"/>
</dbReference>
<dbReference type="GO" id="GO:0030026">
    <property type="term" value="P:intracellular manganese ion homeostasis"/>
    <property type="evidence" value="ECO:0000316"/>
    <property type="project" value="PomBase"/>
</dbReference>
<dbReference type="GO" id="GO:0034755">
    <property type="term" value="P:iron ion transmembrane transport"/>
    <property type="evidence" value="ECO:0000318"/>
    <property type="project" value="GO_Central"/>
</dbReference>
<dbReference type="GO" id="GO:0071421">
    <property type="term" value="P:manganese ion transmembrane transport"/>
    <property type="evidence" value="ECO:0000315"/>
    <property type="project" value="PomBase"/>
</dbReference>
<dbReference type="GO" id="GO:0006828">
    <property type="term" value="P:manganese ion transport"/>
    <property type="evidence" value="ECO:0000318"/>
    <property type="project" value="GO_Central"/>
</dbReference>
<dbReference type="HAMAP" id="MF_00221">
    <property type="entry name" value="NRAMP"/>
    <property type="match status" value="1"/>
</dbReference>
<dbReference type="InterPro" id="IPR001046">
    <property type="entry name" value="NRAMP_fam"/>
</dbReference>
<dbReference type="NCBIfam" id="TIGR01197">
    <property type="entry name" value="nramp"/>
    <property type="match status" value="1"/>
</dbReference>
<dbReference type="NCBIfam" id="NF037982">
    <property type="entry name" value="Nramp_1"/>
    <property type="match status" value="1"/>
</dbReference>
<dbReference type="PANTHER" id="PTHR11706:SF101">
    <property type="entry name" value="MANGANESE TRANSPORTER SMF1"/>
    <property type="match status" value="1"/>
</dbReference>
<dbReference type="PANTHER" id="PTHR11706">
    <property type="entry name" value="SOLUTE CARRIER PROTEIN FAMILY 11 MEMBER"/>
    <property type="match status" value="1"/>
</dbReference>
<dbReference type="Pfam" id="PF01566">
    <property type="entry name" value="Nramp"/>
    <property type="match status" value="1"/>
</dbReference>
<dbReference type="PRINTS" id="PR00447">
    <property type="entry name" value="NATRESASSCMP"/>
</dbReference>
<sequence>MSSQSYYMNDLDDLRSLESSTLNKKDTAINELNPEQNDTRRSTDLLLEDKYGIQTGFSKYWKKCTYGIREYCKFIGPGFLIAVAYIDPGNYSTDLDAGSRFQYKLLFIVFLSNLFAVYLQSLCIRLGSVTGMDLARNCREHYNRYICWSFYVLAEIAIIATDIAEVIGTAVALKILMHIPLVAGVVITILDVLLVLIAWRPEGSMLSVRIFETAVALLVLVVAISFAVVLGRVHIGGAGTVFKGFLPSSTVFSREGLYSSIGILGATVMPHSLFLGSGLVQTRLRDLDVRRGNYTPVGDCSDYRPTHETIKHSLTYSIVEVALSLFTFALFTNSSILIVAGAVFYNTSGADTSDLFSIYDLLKEYVSISCGRLFAVALLFSGMSAGYVCTIAGQIVSEGYINWNLRPWLRRVITRAIAIIPCLVVSAAVGQSGLNQVLNASQVCLSILLPFLTFPLVMFTCSRKVMRVVSDSTNEETGQLIRETHDYSLGWTMTIVTWAIWLFLTALNLLLIVWLGMGVSF</sequence>
<proteinExistence type="evidence at protein level"/>
<feature type="chain" id="PRO_0000212608" description="Manganese transporter pdt1">
    <location>
        <begin position="1"/>
        <end position="521"/>
    </location>
</feature>
<feature type="transmembrane region" description="Helical" evidence="1">
    <location>
        <begin position="71"/>
        <end position="91"/>
    </location>
</feature>
<feature type="transmembrane region" description="Helical" evidence="1">
    <location>
        <begin position="104"/>
        <end position="124"/>
    </location>
</feature>
<feature type="transmembrane region" description="Helical" evidence="1">
    <location>
        <begin position="152"/>
        <end position="172"/>
    </location>
</feature>
<feature type="transmembrane region" description="Helical" evidence="1">
    <location>
        <begin position="179"/>
        <end position="199"/>
    </location>
</feature>
<feature type="transmembrane region" description="Helical" evidence="1">
    <location>
        <begin position="210"/>
        <end position="230"/>
    </location>
</feature>
<feature type="transmembrane region" description="Helical" evidence="1">
    <location>
        <begin position="233"/>
        <end position="253"/>
    </location>
</feature>
<feature type="transmembrane region" description="Helical" evidence="1">
    <location>
        <begin position="260"/>
        <end position="280"/>
    </location>
</feature>
<feature type="transmembrane region" description="Helical" evidence="1">
    <location>
        <begin position="325"/>
        <end position="345"/>
    </location>
</feature>
<feature type="transmembrane region" description="Helical" evidence="1">
    <location>
        <begin position="373"/>
        <end position="393"/>
    </location>
</feature>
<feature type="transmembrane region" description="Helical" evidence="1">
    <location>
        <begin position="417"/>
        <end position="437"/>
    </location>
</feature>
<feature type="transmembrane region" description="Helical" evidence="1">
    <location>
        <begin position="440"/>
        <end position="460"/>
    </location>
</feature>
<feature type="transmembrane region" description="Helical" evidence="1">
    <location>
        <begin position="495"/>
        <end position="515"/>
    </location>
</feature>
<feature type="modified residue" description="Phosphoserine" evidence="4">
    <location>
        <position position="42"/>
    </location>
</feature>
<feature type="modified residue" description="Phosphothreonine" evidence="4">
    <location>
        <position position="43"/>
    </location>
</feature>
<protein>
    <recommendedName>
        <fullName>Manganese transporter pdt1</fullName>
    </recommendedName>
</protein>
<name>PDT1_SCHPO</name>
<accession>Q10177</accession>
<gene>
    <name type="primary">pdt1</name>
    <name type="ORF">SPAC27F1.08</name>
</gene>